<name>PG44_MYCTU</name>
<evidence type="ECO:0000255" key="1"/>
<evidence type="ECO:0000256" key="2">
    <source>
        <dbReference type="SAM" id="MobiDB-lite"/>
    </source>
</evidence>
<evidence type="ECO:0000305" key="3"/>
<accession>P9WIE9</accession>
<accession>L0TD09</accession>
<accession>Q50630</accession>
<dbReference type="EMBL" id="AL123456">
    <property type="protein sequence ID" value="CCP45387.1"/>
    <property type="molecule type" value="Genomic_DNA"/>
</dbReference>
<dbReference type="PIR" id="F70726">
    <property type="entry name" value="F70726"/>
</dbReference>
<dbReference type="RefSeq" id="WP_010886152.1">
    <property type="nucleotide sequence ID" value="NZ_NVQJ01000023.1"/>
</dbReference>
<dbReference type="RefSeq" id="YP_177891.1">
    <property type="nucleotide sequence ID" value="NC_000962.3"/>
</dbReference>
<dbReference type="SMR" id="P9WIE9"/>
<dbReference type="STRING" id="83332.Rv2591"/>
<dbReference type="PaxDb" id="83332-Rv2591"/>
<dbReference type="GeneID" id="887992"/>
<dbReference type="KEGG" id="mtu:Rv2591"/>
<dbReference type="KEGG" id="mtv:RVBD_2591"/>
<dbReference type="TubercuList" id="Rv2591"/>
<dbReference type="eggNOG" id="COG3391">
    <property type="taxonomic scope" value="Bacteria"/>
</dbReference>
<dbReference type="InParanoid" id="P9WIE9"/>
<dbReference type="OrthoDB" id="4750729at2"/>
<dbReference type="Proteomes" id="UP000001584">
    <property type="component" value="Chromosome"/>
</dbReference>
<dbReference type="Gene3D" id="1.10.287.850">
    <property type="entry name" value="HP0062-like domain"/>
    <property type="match status" value="1"/>
</dbReference>
<dbReference type="InterPro" id="IPR000084">
    <property type="entry name" value="PE-PGRS_N"/>
</dbReference>
<dbReference type="InterPro" id="IPR048996">
    <property type="entry name" value="PGRS_rpt"/>
</dbReference>
<dbReference type="Pfam" id="PF00934">
    <property type="entry name" value="PE"/>
    <property type="match status" value="1"/>
</dbReference>
<dbReference type="Pfam" id="PF21526">
    <property type="entry name" value="PGRS"/>
    <property type="match status" value="1"/>
</dbReference>
<dbReference type="SUPFAM" id="SSF140459">
    <property type="entry name" value="PE/PPE dimer-like"/>
    <property type="match status" value="1"/>
</dbReference>
<reference key="1">
    <citation type="journal article" date="1998" name="Nature">
        <title>Deciphering the biology of Mycobacterium tuberculosis from the complete genome sequence.</title>
        <authorList>
            <person name="Cole S.T."/>
            <person name="Brosch R."/>
            <person name="Parkhill J."/>
            <person name="Garnier T."/>
            <person name="Churcher C.M."/>
            <person name="Harris D.E."/>
            <person name="Gordon S.V."/>
            <person name="Eiglmeier K."/>
            <person name="Gas S."/>
            <person name="Barry C.E. III"/>
            <person name="Tekaia F."/>
            <person name="Badcock K."/>
            <person name="Basham D."/>
            <person name="Brown D."/>
            <person name="Chillingworth T."/>
            <person name="Connor R."/>
            <person name="Davies R.M."/>
            <person name="Devlin K."/>
            <person name="Feltwell T."/>
            <person name="Gentles S."/>
            <person name="Hamlin N."/>
            <person name="Holroyd S."/>
            <person name="Hornsby T."/>
            <person name="Jagels K."/>
            <person name="Krogh A."/>
            <person name="McLean J."/>
            <person name="Moule S."/>
            <person name="Murphy L.D."/>
            <person name="Oliver S."/>
            <person name="Osborne J."/>
            <person name="Quail M.A."/>
            <person name="Rajandream M.A."/>
            <person name="Rogers J."/>
            <person name="Rutter S."/>
            <person name="Seeger K."/>
            <person name="Skelton S."/>
            <person name="Squares S."/>
            <person name="Squares R."/>
            <person name="Sulston J.E."/>
            <person name="Taylor K."/>
            <person name="Whitehead S."/>
            <person name="Barrell B.G."/>
        </authorList>
    </citation>
    <scope>NUCLEOTIDE SEQUENCE [LARGE SCALE GENOMIC DNA]</scope>
    <source>
        <strain>ATCC 25618 / H37Rv</strain>
    </source>
</reference>
<comment type="similarity">
    <text evidence="3">Belongs to the mycobacterial PE family. PGRS subfamily.</text>
</comment>
<protein>
    <recommendedName>
        <fullName>Uncharacterized PE-PGRS family protein PE_PGRS44</fullName>
    </recommendedName>
</protein>
<proteinExistence type="inferred from homology"/>
<gene>
    <name type="primary">PE_PGRS44</name>
    <name type="ordered locus">Rv2591</name>
    <name type="ORF">MTCY227.10c</name>
</gene>
<feature type="chain" id="PRO_0000216169" description="Uncharacterized PE-PGRS family protein PE_PGRS44">
    <location>
        <begin position="1"/>
        <end position="543"/>
    </location>
</feature>
<feature type="domain" description="PE" evidence="1">
    <location>
        <begin position="1"/>
        <end position="93"/>
    </location>
</feature>
<feature type="region of interest" description="Disordered" evidence="2">
    <location>
        <begin position="194"/>
        <end position="214"/>
    </location>
</feature>
<sequence>MSFVTAAPEMLATAAQNVANIGTSLSAANATAAASTTSVLAAGADEVSQAIARLFSDYATHYQSLNAQAAAFHHSFVQTLNAAGGAYSSAEAANASAQALEQNLLAVINAPAQALFGRPLIGNGANGTAASPNGGDGGILYGNGGNGFSQTTAGVAGGAGGSAGLIGNGGNGGAGGAGAAGGAGGAGGWLLGNGGAGGPGGPTDVPAGTGGAGGAGGDAPLIGWGGNGGPGGFAAFGNGGAGGNGGASGSLFGVGGAGGVGGSSEDVGGTGGAGGAGRGLFLGLGGDGGAGGTSNNNGGDGGAGGTAGGRLFSLGGDGGNGGAGTAIGSNAGDGGAGGDSSALIGYAQGGSGGLGGFGESTGGDGGLGGAGAVLIGTGVGGFGGLGGGSNGTGGAGGAGGTGATLIGLGAGGGGGIGGFAVNVGNGVGGLGGQGGQGAALIGLGAGGAGGAGGATVVGLGGNGGDGGDGGGLFSIGVGGDGGNAGNGAMPANGGNGGNAGVIANGSFAPSFVGFGGNGGNGVNGGTGGSGGILFGANGANGPS</sequence>
<organism>
    <name type="scientific">Mycobacterium tuberculosis (strain ATCC 25618 / H37Rv)</name>
    <dbReference type="NCBI Taxonomy" id="83332"/>
    <lineage>
        <taxon>Bacteria</taxon>
        <taxon>Bacillati</taxon>
        <taxon>Actinomycetota</taxon>
        <taxon>Actinomycetes</taxon>
        <taxon>Mycobacteriales</taxon>
        <taxon>Mycobacteriaceae</taxon>
        <taxon>Mycobacterium</taxon>
        <taxon>Mycobacterium tuberculosis complex</taxon>
    </lineage>
</organism>
<keyword id="KW-1185">Reference proteome</keyword>